<accession>Q48RF4</accession>
<dbReference type="EMBL" id="CP000056">
    <property type="protein sequence ID" value="AAX72706.1"/>
    <property type="molecule type" value="Genomic_DNA"/>
</dbReference>
<dbReference type="RefSeq" id="WP_002982870.1">
    <property type="nucleotide sequence ID" value="NC_007296.2"/>
</dbReference>
<dbReference type="SMR" id="Q48RF4"/>
<dbReference type="GeneID" id="83705580"/>
<dbReference type="KEGG" id="spb:M28_Spy1596"/>
<dbReference type="HOGENOM" id="CLU_064548_7_1_9"/>
<dbReference type="GO" id="GO:1990904">
    <property type="term" value="C:ribonucleoprotein complex"/>
    <property type="evidence" value="ECO:0007669"/>
    <property type="project" value="UniProtKB-KW"/>
</dbReference>
<dbReference type="GO" id="GO:0005840">
    <property type="term" value="C:ribosome"/>
    <property type="evidence" value="ECO:0007669"/>
    <property type="project" value="UniProtKB-KW"/>
</dbReference>
<dbReference type="GO" id="GO:0003735">
    <property type="term" value="F:structural constituent of ribosome"/>
    <property type="evidence" value="ECO:0007669"/>
    <property type="project" value="InterPro"/>
</dbReference>
<dbReference type="GO" id="GO:0006412">
    <property type="term" value="P:translation"/>
    <property type="evidence" value="ECO:0007669"/>
    <property type="project" value="UniProtKB-UniRule"/>
</dbReference>
<dbReference type="Gene3D" id="2.30.170.40">
    <property type="entry name" value="Ribosomal protein L28/L24"/>
    <property type="match status" value="1"/>
</dbReference>
<dbReference type="HAMAP" id="MF_00373">
    <property type="entry name" value="Ribosomal_bL28"/>
    <property type="match status" value="1"/>
</dbReference>
<dbReference type="InterPro" id="IPR050096">
    <property type="entry name" value="Bacterial_rp_bL28"/>
</dbReference>
<dbReference type="InterPro" id="IPR026569">
    <property type="entry name" value="Ribosomal_bL28"/>
</dbReference>
<dbReference type="InterPro" id="IPR034704">
    <property type="entry name" value="Ribosomal_bL28/bL31-like_sf"/>
</dbReference>
<dbReference type="InterPro" id="IPR001383">
    <property type="entry name" value="Ribosomal_bL28_bact-type"/>
</dbReference>
<dbReference type="InterPro" id="IPR037147">
    <property type="entry name" value="Ribosomal_bL28_sf"/>
</dbReference>
<dbReference type="NCBIfam" id="TIGR00009">
    <property type="entry name" value="L28"/>
    <property type="match status" value="1"/>
</dbReference>
<dbReference type="PANTHER" id="PTHR39080">
    <property type="entry name" value="50S RIBOSOMAL PROTEIN L28"/>
    <property type="match status" value="1"/>
</dbReference>
<dbReference type="PANTHER" id="PTHR39080:SF1">
    <property type="entry name" value="LARGE RIBOSOMAL SUBUNIT PROTEIN BL28A"/>
    <property type="match status" value="1"/>
</dbReference>
<dbReference type="Pfam" id="PF00830">
    <property type="entry name" value="Ribosomal_L28"/>
    <property type="match status" value="1"/>
</dbReference>
<dbReference type="SUPFAM" id="SSF143800">
    <property type="entry name" value="L28p-like"/>
    <property type="match status" value="1"/>
</dbReference>
<gene>
    <name evidence="1" type="primary">rpmB</name>
    <name type="ordered locus">M28_Spy1596</name>
</gene>
<sequence length="62" mass="6928">MAKVCYFTGRKTVSGNNRSHAMNQTKRTVKPNLQKVTILVDGKPKKVWASARALKSGKVERI</sequence>
<feature type="chain" id="PRO_1000007375" description="Large ribosomal subunit protein bL28">
    <location>
        <begin position="1"/>
        <end position="62"/>
    </location>
</feature>
<protein>
    <recommendedName>
        <fullName evidence="1">Large ribosomal subunit protein bL28</fullName>
    </recommendedName>
    <alternativeName>
        <fullName evidence="2">50S ribosomal protein L28</fullName>
    </alternativeName>
</protein>
<name>RL28_STRPM</name>
<comment type="similarity">
    <text evidence="1">Belongs to the bacterial ribosomal protein bL28 family.</text>
</comment>
<organism>
    <name type="scientific">Streptococcus pyogenes serotype M28 (strain MGAS6180)</name>
    <dbReference type="NCBI Taxonomy" id="319701"/>
    <lineage>
        <taxon>Bacteria</taxon>
        <taxon>Bacillati</taxon>
        <taxon>Bacillota</taxon>
        <taxon>Bacilli</taxon>
        <taxon>Lactobacillales</taxon>
        <taxon>Streptococcaceae</taxon>
        <taxon>Streptococcus</taxon>
    </lineage>
</organism>
<keyword id="KW-0687">Ribonucleoprotein</keyword>
<keyword id="KW-0689">Ribosomal protein</keyword>
<evidence type="ECO:0000255" key="1">
    <source>
        <dbReference type="HAMAP-Rule" id="MF_00373"/>
    </source>
</evidence>
<evidence type="ECO:0000305" key="2"/>
<reference key="1">
    <citation type="journal article" date="2005" name="J. Infect. Dis.">
        <title>Genome sequence of a serotype M28 strain of group A Streptococcus: potential new insights into puerperal sepsis and bacterial disease specificity.</title>
        <authorList>
            <person name="Green N.M."/>
            <person name="Zhang S."/>
            <person name="Porcella S.F."/>
            <person name="Nagiec M.J."/>
            <person name="Barbian K.D."/>
            <person name="Beres S.B."/>
            <person name="Lefebvre R.B."/>
            <person name="Musser J.M."/>
        </authorList>
    </citation>
    <scope>NUCLEOTIDE SEQUENCE [LARGE SCALE GENOMIC DNA]</scope>
    <source>
        <strain>MGAS6180</strain>
    </source>
</reference>
<proteinExistence type="inferred from homology"/>